<feature type="chain" id="PRO_1000077746" description="UvrABC system protein C">
    <location>
        <begin position="1"/>
        <end position="641"/>
    </location>
</feature>
<feature type="domain" description="GIY-YIG" evidence="1">
    <location>
        <begin position="16"/>
        <end position="95"/>
    </location>
</feature>
<feature type="domain" description="UVR" evidence="1">
    <location>
        <begin position="208"/>
        <end position="243"/>
    </location>
</feature>
<dbReference type="EMBL" id="CP000481">
    <property type="protein sequence ID" value="ABK52882.1"/>
    <property type="molecule type" value="Genomic_DNA"/>
</dbReference>
<dbReference type="RefSeq" id="WP_011719945.1">
    <property type="nucleotide sequence ID" value="NC_008578.1"/>
</dbReference>
<dbReference type="SMR" id="A0LTX2"/>
<dbReference type="FunCoup" id="A0LTX2">
    <property type="interactions" value="26"/>
</dbReference>
<dbReference type="STRING" id="351607.Acel_1110"/>
<dbReference type="KEGG" id="ace:Acel_1110"/>
<dbReference type="eggNOG" id="COG0322">
    <property type="taxonomic scope" value="Bacteria"/>
</dbReference>
<dbReference type="HOGENOM" id="CLU_014841_3_2_11"/>
<dbReference type="InParanoid" id="A0LTX2"/>
<dbReference type="OrthoDB" id="9804933at2"/>
<dbReference type="Proteomes" id="UP000008221">
    <property type="component" value="Chromosome"/>
</dbReference>
<dbReference type="GO" id="GO:0005737">
    <property type="term" value="C:cytoplasm"/>
    <property type="evidence" value="ECO:0007669"/>
    <property type="project" value="UniProtKB-SubCell"/>
</dbReference>
<dbReference type="GO" id="GO:0009380">
    <property type="term" value="C:excinuclease repair complex"/>
    <property type="evidence" value="ECO:0007669"/>
    <property type="project" value="InterPro"/>
</dbReference>
<dbReference type="GO" id="GO:0003677">
    <property type="term" value="F:DNA binding"/>
    <property type="evidence" value="ECO:0007669"/>
    <property type="project" value="UniProtKB-UniRule"/>
</dbReference>
<dbReference type="GO" id="GO:0009381">
    <property type="term" value="F:excinuclease ABC activity"/>
    <property type="evidence" value="ECO:0007669"/>
    <property type="project" value="UniProtKB-UniRule"/>
</dbReference>
<dbReference type="GO" id="GO:0006289">
    <property type="term" value="P:nucleotide-excision repair"/>
    <property type="evidence" value="ECO:0007669"/>
    <property type="project" value="UniProtKB-UniRule"/>
</dbReference>
<dbReference type="GO" id="GO:0009432">
    <property type="term" value="P:SOS response"/>
    <property type="evidence" value="ECO:0007669"/>
    <property type="project" value="UniProtKB-UniRule"/>
</dbReference>
<dbReference type="CDD" id="cd10434">
    <property type="entry name" value="GIY-YIG_UvrC_Cho"/>
    <property type="match status" value="1"/>
</dbReference>
<dbReference type="FunFam" id="3.30.420.340:FF:000003">
    <property type="entry name" value="UvrABC system protein C"/>
    <property type="match status" value="1"/>
</dbReference>
<dbReference type="FunFam" id="3.40.1440.10:FF:000001">
    <property type="entry name" value="UvrABC system protein C"/>
    <property type="match status" value="1"/>
</dbReference>
<dbReference type="Gene3D" id="1.10.150.20">
    <property type="entry name" value="5' to 3' exonuclease, C-terminal subdomain"/>
    <property type="match status" value="1"/>
</dbReference>
<dbReference type="Gene3D" id="3.40.1440.10">
    <property type="entry name" value="GIY-YIG endonuclease"/>
    <property type="match status" value="1"/>
</dbReference>
<dbReference type="Gene3D" id="4.10.860.10">
    <property type="entry name" value="UVR domain"/>
    <property type="match status" value="1"/>
</dbReference>
<dbReference type="Gene3D" id="3.30.420.340">
    <property type="entry name" value="UvrC, RNAse H endonuclease domain"/>
    <property type="match status" value="1"/>
</dbReference>
<dbReference type="HAMAP" id="MF_00203">
    <property type="entry name" value="UvrC"/>
    <property type="match status" value="1"/>
</dbReference>
<dbReference type="InterPro" id="IPR000305">
    <property type="entry name" value="GIY-YIG_endonuc"/>
</dbReference>
<dbReference type="InterPro" id="IPR035901">
    <property type="entry name" value="GIY-YIG_endonuc_sf"/>
</dbReference>
<dbReference type="InterPro" id="IPR047296">
    <property type="entry name" value="GIY-YIG_UvrC_Cho"/>
</dbReference>
<dbReference type="InterPro" id="IPR003583">
    <property type="entry name" value="Hlx-hairpin-Hlx_DNA-bd_motif"/>
</dbReference>
<dbReference type="InterPro" id="IPR010994">
    <property type="entry name" value="RuvA_2-like"/>
</dbReference>
<dbReference type="InterPro" id="IPR001943">
    <property type="entry name" value="UVR_dom"/>
</dbReference>
<dbReference type="InterPro" id="IPR036876">
    <property type="entry name" value="UVR_dom_sf"/>
</dbReference>
<dbReference type="InterPro" id="IPR050066">
    <property type="entry name" value="UvrABC_protein_C"/>
</dbReference>
<dbReference type="InterPro" id="IPR004791">
    <property type="entry name" value="UvrC"/>
</dbReference>
<dbReference type="InterPro" id="IPR001162">
    <property type="entry name" value="UvrC_RNase_H_dom"/>
</dbReference>
<dbReference type="InterPro" id="IPR038476">
    <property type="entry name" value="UvrC_RNase_H_dom_sf"/>
</dbReference>
<dbReference type="NCBIfam" id="NF001824">
    <property type="entry name" value="PRK00558.1-5"/>
    <property type="match status" value="1"/>
</dbReference>
<dbReference type="NCBIfam" id="TIGR00194">
    <property type="entry name" value="uvrC"/>
    <property type="match status" value="1"/>
</dbReference>
<dbReference type="PANTHER" id="PTHR30562:SF1">
    <property type="entry name" value="UVRABC SYSTEM PROTEIN C"/>
    <property type="match status" value="1"/>
</dbReference>
<dbReference type="PANTHER" id="PTHR30562">
    <property type="entry name" value="UVRC/OXIDOREDUCTASE"/>
    <property type="match status" value="1"/>
</dbReference>
<dbReference type="Pfam" id="PF01541">
    <property type="entry name" value="GIY-YIG"/>
    <property type="match status" value="1"/>
</dbReference>
<dbReference type="Pfam" id="PF14520">
    <property type="entry name" value="HHH_5"/>
    <property type="match status" value="1"/>
</dbReference>
<dbReference type="Pfam" id="PF02151">
    <property type="entry name" value="UVR"/>
    <property type="match status" value="1"/>
</dbReference>
<dbReference type="Pfam" id="PF22920">
    <property type="entry name" value="UvrC_RNaseH"/>
    <property type="match status" value="1"/>
</dbReference>
<dbReference type="Pfam" id="PF08459">
    <property type="entry name" value="UvrC_RNaseH_dom"/>
    <property type="match status" value="1"/>
</dbReference>
<dbReference type="SMART" id="SM00465">
    <property type="entry name" value="GIYc"/>
    <property type="match status" value="1"/>
</dbReference>
<dbReference type="SMART" id="SM00278">
    <property type="entry name" value="HhH1"/>
    <property type="match status" value="2"/>
</dbReference>
<dbReference type="SUPFAM" id="SSF46600">
    <property type="entry name" value="C-terminal UvrC-binding domain of UvrB"/>
    <property type="match status" value="1"/>
</dbReference>
<dbReference type="SUPFAM" id="SSF82771">
    <property type="entry name" value="GIY-YIG endonuclease"/>
    <property type="match status" value="1"/>
</dbReference>
<dbReference type="SUPFAM" id="SSF47781">
    <property type="entry name" value="RuvA domain 2-like"/>
    <property type="match status" value="1"/>
</dbReference>
<dbReference type="PROSITE" id="PS50164">
    <property type="entry name" value="GIY_YIG"/>
    <property type="match status" value="1"/>
</dbReference>
<dbReference type="PROSITE" id="PS50151">
    <property type="entry name" value="UVR"/>
    <property type="match status" value="1"/>
</dbReference>
<dbReference type="PROSITE" id="PS50165">
    <property type="entry name" value="UVRC"/>
    <property type="match status" value="1"/>
</dbReference>
<sequence length="641" mass="71800">MHAPQLRKPAAGEIPESPGVYRFWDAHDRVIYVGKAKNLRARLTSYFADPALLHPRTRAMVTAAARLDWVIVRTEVEALQLEYNWIKQYEPRFNIKYRDDKSYPYLAVTLAEPVPRLMVYRGKRKKGNRYFGPFAHAWAIRDTLDLLLRVFPARTCSAGVYRRAQRIGRPCLLGYIGKCSAPCVGWVSEEQHRQIVLDFCDVMGGRATEYLRRLEKDMRAAAAAEDFERAARLRDDAAALRLAIEKQTVVLPENTDADVIALADDDLEAAVHVFFVRDGRVRGQRGWVVEKVEALDTADLVQHFLAQLYGETGAESADVPREILVPVAPSDTETLERWLSSRRGGRVTIRVPQRGDKKALLETVAQNAAQALHLHKVRRAGDLTARGRALREIQEALNLPDAPLRIECYDVSTLQGTDVVASMVVFEDGLPRKSEYRRFALRGVGGGDVGAIHEVISRRFRRYLDERMQTDSPIDDGTGPDQPRVDAAAHHRKFSYPPSLVIVDGGAPQVAAAKKALDELGIDDVALAGLAKRLEEIWLPDREEPVILPRASEGLYLLQRLRDEAHRFAISYHRAKRSTSMTRSVLEGIPGIGETRRKAFLRHFGSVQRMRQATVAELAAVPGVGRRTAEVVFAALHGADQ</sequence>
<name>UVRC_ACIC1</name>
<organism>
    <name type="scientific">Acidothermus cellulolyticus (strain ATCC 43068 / DSM 8971 / 11B)</name>
    <dbReference type="NCBI Taxonomy" id="351607"/>
    <lineage>
        <taxon>Bacteria</taxon>
        <taxon>Bacillati</taxon>
        <taxon>Actinomycetota</taxon>
        <taxon>Actinomycetes</taxon>
        <taxon>Acidothermales</taxon>
        <taxon>Acidothermaceae</taxon>
        <taxon>Acidothermus</taxon>
    </lineage>
</organism>
<protein>
    <recommendedName>
        <fullName evidence="1">UvrABC system protein C</fullName>
        <shortName evidence="1">Protein UvrC</shortName>
    </recommendedName>
    <alternativeName>
        <fullName evidence="1">Excinuclease ABC subunit C</fullName>
    </alternativeName>
</protein>
<reference key="1">
    <citation type="journal article" date="2009" name="Genome Res.">
        <title>Complete genome of the cellulolytic thermophile Acidothermus cellulolyticus 11B provides insights into its ecophysiological and evolutionary adaptations.</title>
        <authorList>
            <person name="Barabote R.D."/>
            <person name="Xie G."/>
            <person name="Leu D.H."/>
            <person name="Normand P."/>
            <person name="Necsulea A."/>
            <person name="Daubin V."/>
            <person name="Medigue C."/>
            <person name="Adney W.S."/>
            <person name="Xu X.C."/>
            <person name="Lapidus A."/>
            <person name="Parales R.E."/>
            <person name="Detter C."/>
            <person name="Pujic P."/>
            <person name="Bruce D."/>
            <person name="Lavire C."/>
            <person name="Challacombe J.F."/>
            <person name="Brettin T.S."/>
            <person name="Berry A.M."/>
        </authorList>
    </citation>
    <scope>NUCLEOTIDE SEQUENCE [LARGE SCALE GENOMIC DNA]</scope>
    <source>
        <strain>ATCC 43068 / DSM 8971 / 11B</strain>
    </source>
</reference>
<keyword id="KW-0963">Cytoplasm</keyword>
<keyword id="KW-0227">DNA damage</keyword>
<keyword id="KW-0228">DNA excision</keyword>
<keyword id="KW-0234">DNA repair</keyword>
<keyword id="KW-0267">Excision nuclease</keyword>
<keyword id="KW-1185">Reference proteome</keyword>
<keyword id="KW-0742">SOS response</keyword>
<evidence type="ECO:0000255" key="1">
    <source>
        <dbReference type="HAMAP-Rule" id="MF_00203"/>
    </source>
</evidence>
<comment type="function">
    <text evidence="1">The UvrABC repair system catalyzes the recognition and processing of DNA lesions. UvrC both incises the 5' and 3' sides of the lesion. The N-terminal half is responsible for the 3' incision and the C-terminal half is responsible for the 5' incision.</text>
</comment>
<comment type="subunit">
    <text evidence="1">Interacts with UvrB in an incision complex.</text>
</comment>
<comment type="subcellular location">
    <subcellularLocation>
        <location evidence="1">Cytoplasm</location>
    </subcellularLocation>
</comment>
<comment type="similarity">
    <text evidence="1">Belongs to the UvrC family.</text>
</comment>
<accession>A0LTX2</accession>
<proteinExistence type="inferred from homology"/>
<gene>
    <name evidence="1" type="primary">uvrC</name>
    <name type="ordered locus">Acel_1110</name>
</gene>